<protein>
    <recommendedName>
        <fullName evidence="1 5">Succinate--CoA ligase [ADP-forming] subunit beta, mitochondrial</fullName>
        <ecNumber evidence="1 3">6.2.1.5</ecNumber>
    </recommendedName>
    <alternativeName>
        <fullName evidence="1">Succinyl-CoA synthetase beta chain</fullName>
        <shortName evidence="1">SCS-beta</shortName>
    </alternativeName>
</protein>
<name>SUCB_YEAST</name>
<sequence length="427" mass="46901">MYSRKSLSLISKCGQLSRLNAQAALQARRHLSIHEYRSAQLLREYGIGTPEGFPAFTPEEAFEAAKKLNTNKLVIKAQALTGGRGKGHFDTGYKSGVHMIESPQQAEDVAKEMLNHNLITKQTGIAGKPVSAVYIVKRVDTKHEAYLSILMDRQTKKPMIIASSQGGMNIEEVAERTPDAIKKFSIETSKGLSPQMAKDVAKSLGFSPDAQDEAAKAVSNLYKIFMERDATQVEINPLSEIEHDPTHKIMCTDAKFGFDDNASFRQEKIYSWRDLSQEDPDEVKAKKYDLNFVKLKGNIGCLVNGAGLAMATMDVIKLNGGDPANFLDCGGGATPETIKQGFELILSNKNVDAIFVNIFGGIVRCDYVALGLVEAARELEVRVPIVARLQGTKVEEGRDIINKSGVKIYSFDELDPAAKKVVELTQN</sequence>
<reference key="1">
    <citation type="journal article" date="1997" name="Yeast">
        <title>Sequencing of a 9.9 kb segment on the right arm of yeast chromosome VII reveals four open reading frames, including PFK1, the gene coding for succinyl-CoA synthetase (beta-chain) and two ORFs sharing homology with ORFs of the yeast chromosome VIII.</title>
        <authorList>
            <person name="Guerreiro P."/>
            <person name="Azevedo D."/>
            <person name="Barreiros T."/>
            <person name="Rodrigues-Pousada C."/>
        </authorList>
    </citation>
    <scope>NUCLEOTIDE SEQUENCE [GENOMIC DNA]</scope>
    <source>
        <strain>ATCC 204508 / S288c</strain>
    </source>
</reference>
<reference key="2">
    <citation type="journal article" date="1997" name="Nature">
        <title>The nucleotide sequence of Saccharomyces cerevisiae chromosome VII.</title>
        <authorList>
            <person name="Tettelin H."/>
            <person name="Agostoni-Carbone M.L."/>
            <person name="Albermann K."/>
            <person name="Albers M."/>
            <person name="Arroyo J."/>
            <person name="Backes U."/>
            <person name="Barreiros T."/>
            <person name="Bertani I."/>
            <person name="Bjourson A.J."/>
            <person name="Brueckner M."/>
            <person name="Bruschi C.V."/>
            <person name="Carignani G."/>
            <person name="Castagnoli L."/>
            <person name="Cerdan E."/>
            <person name="Clemente M.L."/>
            <person name="Coblenz A."/>
            <person name="Coglievina M."/>
            <person name="Coissac E."/>
            <person name="Defoor E."/>
            <person name="Del Bino S."/>
            <person name="Delius H."/>
            <person name="Delneri D."/>
            <person name="de Wergifosse P."/>
            <person name="Dujon B."/>
            <person name="Durand P."/>
            <person name="Entian K.-D."/>
            <person name="Eraso P."/>
            <person name="Escribano V."/>
            <person name="Fabiani L."/>
            <person name="Fartmann B."/>
            <person name="Feroli F."/>
            <person name="Feuermann M."/>
            <person name="Frontali L."/>
            <person name="Garcia-Gonzalez M."/>
            <person name="Garcia-Saez M.I."/>
            <person name="Goffeau A."/>
            <person name="Guerreiro P."/>
            <person name="Hani J."/>
            <person name="Hansen M."/>
            <person name="Hebling U."/>
            <person name="Hernandez K."/>
            <person name="Heumann K."/>
            <person name="Hilger F."/>
            <person name="Hofmann B."/>
            <person name="Indge K.J."/>
            <person name="James C.M."/>
            <person name="Klima R."/>
            <person name="Koetter P."/>
            <person name="Kramer B."/>
            <person name="Kramer W."/>
            <person name="Lauquin G."/>
            <person name="Leuther H."/>
            <person name="Louis E.J."/>
            <person name="Maillier E."/>
            <person name="Marconi A."/>
            <person name="Martegani E."/>
            <person name="Mazon M.J."/>
            <person name="Mazzoni C."/>
            <person name="McReynolds A.D.K."/>
            <person name="Melchioretto P."/>
            <person name="Mewes H.-W."/>
            <person name="Minenkova O."/>
            <person name="Mueller-Auer S."/>
            <person name="Nawrocki A."/>
            <person name="Netter P."/>
            <person name="Neu R."/>
            <person name="Nombela C."/>
            <person name="Oliver S.G."/>
            <person name="Panzeri L."/>
            <person name="Paoluzi S."/>
            <person name="Plevani P."/>
            <person name="Portetelle D."/>
            <person name="Portillo F."/>
            <person name="Potier S."/>
            <person name="Purnelle B."/>
            <person name="Rieger M."/>
            <person name="Riles L."/>
            <person name="Rinaldi T."/>
            <person name="Robben J."/>
            <person name="Rodrigues-Pousada C."/>
            <person name="Rodriguez-Belmonte E."/>
            <person name="Rodriguez-Torres A.M."/>
            <person name="Rose M."/>
            <person name="Ruzzi M."/>
            <person name="Saliola M."/>
            <person name="Sanchez-Perez M."/>
            <person name="Schaefer B."/>
            <person name="Schaefer M."/>
            <person name="Scharfe M."/>
            <person name="Schmidheini T."/>
            <person name="Schreer A."/>
            <person name="Skala J."/>
            <person name="Souciet J.-L."/>
            <person name="Steensma H.Y."/>
            <person name="Talla E."/>
            <person name="Thierry A."/>
            <person name="Vandenbol M."/>
            <person name="van der Aart Q.J.M."/>
            <person name="Van Dyck L."/>
            <person name="Vanoni M."/>
            <person name="Verhasselt P."/>
            <person name="Voet M."/>
            <person name="Volckaert G."/>
            <person name="Wambutt R."/>
            <person name="Watson M.D."/>
            <person name="Weber N."/>
            <person name="Wedler E."/>
            <person name="Wedler H."/>
            <person name="Wipfli P."/>
            <person name="Wolf K."/>
            <person name="Wright L.F."/>
            <person name="Zaccaria P."/>
            <person name="Zimmermann M."/>
            <person name="Zollner A."/>
            <person name="Kleine K."/>
        </authorList>
    </citation>
    <scope>NUCLEOTIDE SEQUENCE [LARGE SCALE GENOMIC DNA]</scope>
    <source>
        <strain>ATCC 204508 / S288c</strain>
    </source>
</reference>
<reference key="3">
    <citation type="journal article" date="2014" name="G3 (Bethesda)">
        <title>The reference genome sequence of Saccharomyces cerevisiae: Then and now.</title>
        <authorList>
            <person name="Engel S.R."/>
            <person name="Dietrich F.S."/>
            <person name="Fisk D.G."/>
            <person name="Binkley G."/>
            <person name="Balakrishnan R."/>
            <person name="Costanzo M.C."/>
            <person name="Dwight S.S."/>
            <person name="Hitz B.C."/>
            <person name="Karra K."/>
            <person name="Nash R.S."/>
            <person name="Weng S."/>
            <person name="Wong E.D."/>
            <person name="Lloyd P."/>
            <person name="Skrzypek M.S."/>
            <person name="Miyasato S.R."/>
            <person name="Simison M."/>
            <person name="Cherry J.M."/>
        </authorList>
    </citation>
    <scope>GENOME REANNOTATION</scope>
    <source>
        <strain>ATCC 204508 / S288c</strain>
    </source>
</reference>
<reference key="4">
    <citation type="journal article" date="1998" name="Eur. J. Biochem.">
        <title>Genes of succinyl-CoA ligase from Saccharomyces cerevisiae.</title>
        <authorList>
            <person name="Przybyla-Zawislak B."/>
            <person name="Dennis R.A."/>
            <person name="Zakharkin S.O."/>
            <person name="McCammon M.T."/>
        </authorList>
    </citation>
    <scope>FUNCTION</scope>
    <scope>CATALYTIC ACTIVITY</scope>
</reference>
<reference key="5">
    <citation type="journal article" date="2003" name="Proc. Natl. Acad. Sci. U.S.A.">
        <title>The proteome of Saccharomyces cerevisiae mitochondria.</title>
        <authorList>
            <person name="Sickmann A."/>
            <person name="Reinders J."/>
            <person name="Wagner Y."/>
            <person name="Joppich C."/>
            <person name="Zahedi R.P."/>
            <person name="Meyer H.E."/>
            <person name="Schoenfisch B."/>
            <person name="Perschil I."/>
            <person name="Chacinska A."/>
            <person name="Guiard B."/>
            <person name="Rehling P."/>
            <person name="Pfanner N."/>
            <person name="Meisinger C."/>
        </authorList>
    </citation>
    <scope>SUBCELLULAR LOCATION [LARGE SCALE ANALYSIS]</scope>
    <source>
        <strain>ATCC 76625 / YPH499</strain>
    </source>
</reference>
<reference key="6">
    <citation type="journal article" date="2007" name="J. Proteome Res.">
        <title>Large-scale phosphorylation analysis of alpha-factor-arrested Saccharomyces cerevisiae.</title>
        <authorList>
            <person name="Li X."/>
            <person name="Gerber S.A."/>
            <person name="Rudner A.D."/>
            <person name="Beausoleil S.A."/>
            <person name="Haas W."/>
            <person name="Villen J."/>
            <person name="Elias J.E."/>
            <person name="Gygi S.P."/>
        </authorList>
    </citation>
    <scope>PHOSPHORYLATION [LARGE SCALE ANALYSIS] AT SER-102</scope>
    <scope>IDENTIFICATION BY MASS SPECTROMETRY [LARGE SCALE ANALYSIS]</scope>
    <source>
        <strain>ADR376</strain>
    </source>
</reference>
<reference key="7">
    <citation type="journal article" date="2008" name="Mol. Cell. Proteomics">
        <title>A multidimensional chromatography technology for in-depth phosphoproteome analysis.</title>
        <authorList>
            <person name="Albuquerque C.P."/>
            <person name="Smolka M.B."/>
            <person name="Payne S.H."/>
            <person name="Bafna V."/>
            <person name="Eng J."/>
            <person name="Zhou H."/>
        </authorList>
    </citation>
    <scope>PHOSPHORYLATION [LARGE SCALE ANALYSIS] AT SER-102; SER-263 AND SER-276</scope>
    <scope>IDENTIFICATION BY MASS SPECTROMETRY [LARGE SCALE ANALYSIS]</scope>
</reference>
<comment type="function">
    <text evidence="1 3">Succinyl-CoA synthetase functions in the citric acid cycle (TCA), coupling the hydrolysis of succinyl-CoA to the synthesis of ATP and thus represents the only step of substrate-level phosphorylation in the TCA (PubMed:9874242). The beta subunit provides nucleotide specificity of the enzyme and binds the substrate succinate, while the binding sites for coenzyme A and phosphate are found in the alpha subunit (By similarity).</text>
</comment>
<comment type="catalytic activity">
    <reaction evidence="1 3">
        <text>succinate + ATP + CoA = succinyl-CoA + ADP + phosphate</text>
        <dbReference type="Rhea" id="RHEA:17661"/>
        <dbReference type="ChEBI" id="CHEBI:30031"/>
        <dbReference type="ChEBI" id="CHEBI:30616"/>
        <dbReference type="ChEBI" id="CHEBI:43474"/>
        <dbReference type="ChEBI" id="CHEBI:57287"/>
        <dbReference type="ChEBI" id="CHEBI:57292"/>
        <dbReference type="ChEBI" id="CHEBI:456216"/>
        <dbReference type="EC" id="6.2.1.5"/>
    </reaction>
</comment>
<comment type="cofactor">
    <cofactor evidence="1">
        <name>Mg(2+)</name>
        <dbReference type="ChEBI" id="CHEBI:18420"/>
    </cofactor>
    <text evidence="1">Binds 1 Mg(2+) ion per subunit.</text>
</comment>
<comment type="pathway">
    <text evidence="1 5">Carbohydrate metabolism; tricarboxylic acid cycle; succinate from succinyl-CoA (ligase route): step 1/1.</text>
</comment>
<comment type="subunit">
    <text evidence="1">Heterodimer of an alpha and a beta subunit.</text>
</comment>
<comment type="interaction">
    <interactant intactId="EBI-18513">
        <id>P53312</id>
    </interactant>
    <interactant intactId="EBI-18506">
        <id>P53598</id>
        <label>LSC1</label>
    </interactant>
    <organismsDiffer>false</organismsDiffer>
    <experiments>2</experiments>
</comment>
<comment type="subcellular location">
    <subcellularLocation>
        <location evidence="1 2">Mitochondrion</location>
    </subcellularLocation>
</comment>
<comment type="similarity">
    <text evidence="1">Belongs to the succinate/malate CoA ligase beta subunit family.</text>
</comment>
<gene>
    <name evidence="4" type="primary">LSC2</name>
    <name evidence="6" type="ordered locus">YGR244C</name>
    <name type="ORF">G8625</name>
</gene>
<accession>P53312</accession>
<accession>D6VV24</accession>
<dbReference type="EC" id="6.2.1.5" evidence="1 3"/>
<dbReference type="EMBL" id="Z73029">
    <property type="protein sequence ID" value="CAA97273.1"/>
    <property type="molecule type" value="Genomic_DNA"/>
</dbReference>
<dbReference type="EMBL" id="BK006941">
    <property type="protein sequence ID" value="DAA08335.1"/>
    <property type="molecule type" value="Genomic_DNA"/>
</dbReference>
<dbReference type="PIR" id="S64570">
    <property type="entry name" value="S64570"/>
</dbReference>
<dbReference type="RefSeq" id="NP_011760.3">
    <property type="nucleotide sequence ID" value="NM_001181373.3"/>
</dbReference>
<dbReference type="SMR" id="P53312"/>
<dbReference type="BioGRID" id="33495">
    <property type="interactions" value="139"/>
</dbReference>
<dbReference type="ComplexPortal" id="CPX-1379">
    <property type="entry name" value="Mitochondrial succinyl-CoA synthetase complex"/>
</dbReference>
<dbReference type="DIP" id="DIP-4003N"/>
<dbReference type="FunCoup" id="P53312">
    <property type="interactions" value="924"/>
</dbReference>
<dbReference type="IntAct" id="P53312">
    <property type="interactions" value="7"/>
</dbReference>
<dbReference type="MINT" id="P53312"/>
<dbReference type="STRING" id="4932.YGR244C"/>
<dbReference type="iPTMnet" id="P53312"/>
<dbReference type="PaxDb" id="4932-YGR244C"/>
<dbReference type="PeptideAtlas" id="P53312"/>
<dbReference type="EnsemblFungi" id="YGR244C_mRNA">
    <property type="protein sequence ID" value="YGR244C"/>
    <property type="gene ID" value="YGR244C"/>
</dbReference>
<dbReference type="GeneID" id="853159"/>
<dbReference type="KEGG" id="sce:YGR244C"/>
<dbReference type="AGR" id="SGD:S000003476"/>
<dbReference type="SGD" id="S000003476">
    <property type="gene designation" value="LSC2"/>
</dbReference>
<dbReference type="VEuPathDB" id="FungiDB:YGR244C"/>
<dbReference type="eggNOG" id="KOG2799">
    <property type="taxonomic scope" value="Eukaryota"/>
</dbReference>
<dbReference type="GeneTree" id="ENSGT00390000010170"/>
<dbReference type="HOGENOM" id="CLU_037430_0_2_1"/>
<dbReference type="InParanoid" id="P53312"/>
<dbReference type="OMA" id="ITACDEV"/>
<dbReference type="OrthoDB" id="1552at2759"/>
<dbReference type="BioCyc" id="YEAST:YGR244C-MONOMER"/>
<dbReference type="Reactome" id="R-SCE-71403">
    <property type="pathway name" value="Citric acid cycle (TCA cycle)"/>
</dbReference>
<dbReference type="UniPathway" id="UPA00223">
    <property type="reaction ID" value="UER00999"/>
</dbReference>
<dbReference type="BioGRID-ORCS" id="853159">
    <property type="hits" value="5 hits in 10 CRISPR screens"/>
</dbReference>
<dbReference type="PRO" id="PR:P53312"/>
<dbReference type="Proteomes" id="UP000002311">
    <property type="component" value="Chromosome VII"/>
</dbReference>
<dbReference type="RNAct" id="P53312">
    <property type="molecule type" value="protein"/>
</dbReference>
<dbReference type="GO" id="GO:0005739">
    <property type="term" value="C:mitochondrion"/>
    <property type="evidence" value="ECO:0000314"/>
    <property type="project" value="ComplexPortal"/>
</dbReference>
<dbReference type="GO" id="GO:0042709">
    <property type="term" value="C:succinate-CoA ligase complex"/>
    <property type="evidence" value="ECO:0000318"/>
    <property type="project" value="GO_Central"/>
</dbReference>
<dbReference type="GO" id="GO:0009361">
    <property type="term" value="C:succinate-CoA ligase complex (ADP-forming)"/>
    <property type="evidence" value="ECO:0000303"/>
    <property type="project" value="ComplexPortal"/>
</dbReference>
<dbReference type="GO" id="GO:0005524">
    <property type="term" value="F:ATP binding"/>
    <property type="evidence" value="ECO:0007669"/>
    <property type="project" value="UniProtKB-UniRule"/>
</dbReference>
<dbReference type="GO" id="GO:0000287">
    <property type="term" value="F:magnesium ion binding"/>
    <property type="evidence" value="ECO:0007669"/>
    <property type="project" value="UniProtKB-UniRule"/>
</dbReference>
<dbReference type="GO" id="GO:0004775">
    <property type="term" value="F:succinate-CoA ligase (ADP-forming) activity"/>
    <property type="evidence" value="ECO:0007669"/>
    <property type="project" value="UniProtKB-UniRule"/>
</dbReference>
<dbReference type="GO" id="GO:1901289">
    <property type="term" value="P:succinyl-CoA catabolic process"/>
    <property type="evidence" value="ECO:0000303"/>
    <property type="project" value="ComplexPortal"/>
</dbReference>
<dbReference type="GO" id="GO:0006104">
    <property type="term" value="P:succinyl-CoA metabolic process"/>
    <property type="evidence" value="ECO:0000314"/>
    <property type="project" value="SGD"/>
</dbReference>
<dbReference type="GO" id="GO:0006099">
    <property type="term" value="P:tricarboxylic acid cycle"/>
    <property type="evidence" value="ECO:0000318"/>
    <property type="project" value="GO_Central"/>
</dbReference>
<dbReference type="FunFam" id="3.30.470.20:FF:000002">
    <property type="entry name" value="Succinate--CoA ligase [ADP-forming] subunit beta"/>
    <property type="match status" value="1"/>
</dbReference>
<dbReference type="FunFam" id="3.40.50.261:FF:000001">
    <property type="entry name" value="Succinate--CoA ligase [ADP-forming] subunit beta"/>
    <property type="match status" value="1"/>
</dbReference>
<dbReference type="FunFam" id="3.30.1490.20:FF:000004">
    <property type="entry name" value="Succinate--CoA ligase [ADP-forming] subunit beta, mitochondrial"/>
    <property type="match status" value="1"/>
</dbReference>
<dbReference type="Gene3D" id="3.30.1490.20">
    <property type="entry name" value="ATP-grasp fold, A domain"/>
    <property type="match status" value="1"/>
</dbReference>
<dbReference type="Gene3D" id="3.30.470.20">
    <property type="entry name" value="ATP-grasp fold, B domain"/>
    <property type="match status" value="1"/>
</dbReference>
<dbReference type="Gene3D" id="3.40.50.261">
    <property type="entry name" value="Succinyl-CoA synthetase domains"/>
    <property type="match status" value="1"/>
</dbReference>
<dbReference type="HAMAP" id="MF_00558">
    <property type="entry name" value="Succ_CoA_beta"/>
    <property type="match status" value="1"/>
</dbReference>
<dbReference type="InterPro" id="IPR013650">
    <property type="entry name" value="ATP-grasp_succ-CoA_synth-type"/>
</dbReference>
<dbReference type="InterPro" id="IPR013815">
    <property type="entry name" value="ATP_grasp_subdomain_1"/>
</dbReference>
<dbReference type="InterPro" id="IPR017866">
    <property type="entry name" value="Succ-CoA_synthase_bsu_CS"/>
</dbReference>
<dbReference type="InterPro" id="IPR005811">
    <property type="entry name" value="SUCC_ACL_C"/>
</dbReference>
<dbReference type="InterPro" id="IPR005809">
    <property type="entry name" value="Succ_CoA_ligase-like_bsu"/>
</dbReference>
<dbReference type="InterPro" id="IPR016102">
    <property type="entry name" value="Succinyl-CoA_synth-like"/>
</dbReference>
<dbReference type="NCBIfam" id="NF001913">
    <property type="entry name" value="PRK00696.1"/>
    <property type="match status" value="1"/>
</dbReference>
<dbReference type="NCBIfam" id="TIGR01016">
    <property type="entry name" value="sucCoAbeta"/>
    <property type="match status" value="1"/>
</dbReference>
<dbReference type="PANTHER" id="PTHR11815:SF1">
    <property type="entry name" value="SUCCINATE--COA LIGASE [ADP-FORMING] SUBUNIT BETA, MITOCHONDRIAL"/>
    <property type="match status" value="1"/>
</dbReference>
<dbReference type="PANTHER" id="PTHR11815">
    <property type="entry name" value="SUCCINYL-COA SYNTHETASE BETA CHAIN"/>
    <property type="match status" value="1"/>
</dbReference>
<dbReference type="Pfam" id="PF08442">
    <property type="entry name" value="ATP-grasp_2"/>
    <property type="match status" value="1"/>
</dbReference>
<dbReference type="Pfam" id="PF00549">
    <property type="entry name" value="Ligase_CoA"/>
    <property type="match status" value="1"/>
</dbReference>
<dbReference type="PIRSF" id="PIRSF001554">
    <property type="entry name" value="SucCS_beta"/>
    <property type="match status" value="1"/>
</dbReference>
<dbReference type="SUPFAM" id="SSF56059">
    <property type="entry name" value="Glutathione synthetase ATP-binding domain-like"/>
    <property type="match status" value="1"/>
</dbReference>
<dbReference type="SUPFAM" id="SSF52210">
    <property type="entry name" value="Succinyl-CoA synthetase domains"/>
    <property type="match status" value="1"/>
</dbReference>
<dbReference type="PROSITE" id="PS01217">
    <property type="entry name" value="SUCCINYL_COA_LIG_3"/>
    <property type="match status" value="1"/>
</dbReference>
<proteinExistence type="evidence at protein level"/>
<feature type="transit peptide" description="Mitochondrion" evidence="1">
    <location>
        <begin position="1"/>
        <end position="30"/>
    </location>
</feature>
<feature type="chain" id="PRO_0000033365" description="Succinate--CoA ligase [ADP-forming] subunit beta, mitochondrial" evidence="1">
    <location>
        <begin position="31"/>
        <end position="427"/>
    </location>
</feature>
<feature type="domain" description="ATP-grasp" evidence="1">
    <location>
        <begin position="39"/>
        <end position="284"/>
    </location>
</feature>
<feature type="binding site" evidence="1">
    <location>
        <position position="76"/>
    </location>
    <ligand>
        <name>ATP</name>
        <dbReference type="ChEBI" id="CHEBI:30616"/>
    </ligand>
</feature>
<feature type="binding site" evidence="1">
    <location>
        <begin position="83"/>
        <end position="85"/>
    </location>
    <ligand>
        <name>ATP</name>
        <dbReference type="ChEBI" id="CHEBI:30616"/>
    </ligand>
</feature>
<feature type="binding site" evidence="1">
    <location>
        <position position="144"/>
    </location>
    <ligand>
        <name>ATP</name>
        <dbReference type="ChEBI" id="CHEBI:30616"/>
    </ligand>
</feature>
<feature type="binding site" evidence="1">
    <location>
        <position position="236"/>
    </location>
    <ligand>
        <name>Mg(2+)</name>
        <dbReference type="ChEBI" id="CHEBI:18420"/>
    </ligand>
</feature>
<feature type="binding site" evidence="1">
    <location>
        <position position="253"/>
    </location>
    <ligand>
        <name>Mg(2+)</name>
        <dbReference type="ChEBI" id="CHEBI:18420"/>
    </ligand>
</feature>
<feature type="binding site" evidence="1">
    <location>
        <position position="304"/>
    </location>
    <ligand>
        <name>substrate</name>
        <note>ligand shared with subunit alpha</note>
    </ligand>
</feature>
<feature type="binding site" evidence="1">
    <location>
        <begin position="361"/>
        <end position="363"/>
    </location>
    <ligand>
        <name>substrate</name>
        <note>ligand shared with subunit alpha</note>
    </ligand>
</feature>
<feature type="modified residue" description="Phosphoserine" evidence="7 8">
    <location>
        <position position="102"/>
    </location>
</feature>
<feature type="modified residue" description="Phosphoserine" evidence="8">
    <location>
        <position position="263"/>
    </location>
</feature>
<feature type="modified residue" description="Phosphoserine" evidence="8">
    <location>
        <position position="276"/>
    </location>
</feature>
<evidence type="ECO:0000255" key="1">
    <source>
        <dbReference type="HAMAP-Rule" id="MF_03219"/>
    </source>
</evidence>
<evidence type="ECO:0000269" key="2">
    <source>
    </source>
</evidence>
<evidence type="ECO:0000269" key="3">
    <source>
    </source>
</evidence>
<evidence type="ECO:0000303" key="4">
    <source>
    </source>
</evidence>
<evidence type="ECO:0000305" key="5">
    <source>
    </source>
</evidence>
<evidence type="ECO:0000312" key="6">
    <source>
        <dbReference type="SGD" id="S000003476"/>
    </source>
</evidence>
<evidence type="ECO:0007744" key="7">
    <source>
    </source>
</evidence>
<evidence type="ECO:0007744" key="8">
    <source>
    </source>
</evidence>
<keyword id="KW-0067">ATP-binding</keyword>
<keyword id="KW-0436">Ligase</keyword>
<keyword id="KW-0460">Magnesium</keyword>
<keyword id="KW-0479">Metal-binding</keyword>
<keyword id="KW-0496">Mitochondrion</keyword>
<keyword id="KW-0547">Nucleotide-binding</keyword>
<keyword id="KW-0597">Phosphoprotein</keyword>
<keyword id="KW-1185">Reference proteome</keyword>
<keyword id="KW-0809">Transit peptide</keyword>
<keyword id="KW-0816">Tricarboxylic acid cycle</keyword>
<organism>
    <name type="scientific">Saccharomyces cerevisiae (strain ATCC 204508 / S288c)</name>
    <name type="common">Baker's yeast</name>
    <dbReference type="NCBI Taxonomy" id="559292"/>
    <lineage>
        <taxon>Eukaryota</taxon>
        <taxon>Fungi</taxon>
        <taxon>Dikarya</taxon>
        <taxon>Ascomycota</taxon>
        <taxon>Saccharomycotina</taxon>
        <taxon>Saccharomycetes</taxon>
        <taxon>Saccharomycetales</taxon>
        <taxon>Saccharomycetaceae</taxon>
        <taxon>Saccharomyces</taxon>
    </lineage>
</organism>